<proteinExistence type="evidence at transcript level"/>
<reference key="1">
    <citation type="submission" date="2002-07" db="EMBL/GenBank/DDBJ databases">
        <authorList>
            <person name="Javaud C."/>
            <person name="Julien R."/>
        </authorList>
    </citation>
    <scope>NUCLEOTIDE SEQUENCE [MRNA]</scope>
</reference>
<comment type="function">
    <text evidence="1 3">Catalyzes alpha(1-&gt;3) linkage of fucosyl moiety transferred from GDP-beta-L-fucose to N-acetyl glucosamine (GlcNAc) within type 2 lactosamine (LacNAc, beta-D-Gal-(1-&gt;4)-beta-D-GlcNAc-) glycan attached to glycolipids and N- or O-linked glycoproteins. Fucosylates distal type 2 LacNAc and its fucosylated (H-type 2 LacNAc) and sialylated (sialyl-type 2 LacNAc) derivatives to form Lewis x (Lex) (CD15) and Lewis y (Ley) antigenic epitopes involved in cell adhesion and differentiation (By similarity). Generates Lex epitopes in the brain, presumably playing a role in the maintenance of neuronal stemness and neurite outgrowth in progenitor neural cells (By similarity). Fucosylates the internal type 2 LacNAc unit of the polylactosamine chain to form VIM-2 antigen that serves as recognition epitope for SELE (By similarity). Can also modify milk oligosaccharides in particular type 2 tetrasaccharide LNnT (By similarity).</text>
</comment>
<comment type="catalytic activity">
    <reaction evidence="3">
        <text>a beta-D-galactosyl-(1-&gt;4)-N-acetyl-beta-D-glucosaminyl derivative + GDP-beta-L-fucose = a beta-D-galactosyl-(1-&gt;4)-[alpha-L-fucosyl-(1-&gt;3)]-N-acetyl-beta-D-glucosaminyl derivative + GDP + H(+)</text>
        <dbReference type="Rhea" id="RHEA:14257"/>
        <dbReference type="ChEBI" id="CHEBI:15378"/>
        <dbReference type="ChEBI" id="CHEBI:57273"/>
        <dbReference type="ChEBI" id="CHEBI:58189"/>
        <dbReference type="ChEBI" id="CHEBI:133507"/>
        <dbReference type="ChEBI" id="CHEBI:137941"/>
        <dbReference type="EC" id="2.4.1.152"/>
    </reaction>
    <physiologicalReaction direction="left-to-right" evidence="3">
        <dbReference type="Rhea" id="RHEA:14258"/>
    </physiologicalReaction>
</comment>
<comment type="catalytic activity">
    <reaction evidence="3">
        <text>an alpha-Neu5Ac-(2-&gt;3)-beta-D-Gal-(1-&gt;4)-beta-D-GlcNAc-(1-&gt;3)-beta-D-Gal-(1-&gt;4)-beta-D-GlcNAc derivative + GDP-beta-L-fucose = an alpha-Neu5Ac-(2-&gt;3)-beta-D-Gal-(1-&gt;4)-beta-D-GlcNAc-(1-&gt;3)-beta-D-Gal-(1-&gt;4)-[alpha-L-Fuc-(1-&gt;3)]-beta-D-GlcNAc derivative + GDP + H(+)</text>
        <dbReference type="Rhea" id="RHEA:68044"/>
        <dbReference type="ChEBI" id="CHEBI:15378"/>
        <dbReference type="ChEBI" id="CHEBI:57273"/>
        <dbReference type="ChEBI" id="CHEBI:58189"/>
        <dbReference type="ChEBI" id="CHEBI:145343"/>
        <dbReference type="ChEBI" id="CHEBI:176900"/>
    </reaction>
    <physiologicalReaction direction="left-to-right" evidence="3">
        <dbReference type="Rhea" id="RHEA:68045"/>
    </physiologicalReaction>
</comment>
<comment type="catalytic activity">
    <reaction evidence="1">
        <text>alpha-N-glycoloylneuraminosyl-(2-&gt;3)-beta-D-galactosyl-(1-&gt;4)-N-acetyl-beta-D-glucosaminyl-(1-&gt;3)-beta-D-galactosyl-(1-&gt;4)-N-acetyl-beta-D-glucosaminyl-(1-&gt;3)-beta-D-galactosyl-(1-&gt;4)-beta-D-glucosyl-(1&lt;-&gt;1')-ceramide + GDP-beta-L-fucose = alpha-N-glycoloylneuraminosyl-(2-&gt;3)-beta-D-galactosyl-(1-&gt;4)-N-acetyl-beta-D-glucosaminyl-(1-&gt;3)-beta-D-galactosyl-(1-&gt;4)-[alpha-L-fucosyl-(1-&gt;3)]-N-acetyl-beta-D-glucosaminyl-(1-&gt;3)-beta-D-galactosyl-(1-&gt;4)-beta-D-glucosyl-(1&lt;-&gt;1')-ceramide + GDP + H(+)</text>
        <dbReference type="Rhea" id="RHEA:48388"/>
        <dbReference type="ChEBI" id="CHEBI:15378"/>
        <dbReference type="ChEBI" id="CHEBI:57273"/>
        <dbReference type="ChEBI" id="CHEBI:58189"/>
        <dbReference type="ChEBI" id="CHEBI:90383"/>
        <dbReference type="ChEBI" id="CHEBI:90384"/>
    </reaction>
    <physiologicalReaction direction="left-to-right" evidence="1">
        <dbReference type="Rhea" id="RHEA:48389"/>
    </physiologicalReaction>
</comment>
<comment type="catalytic activity">
    <reaction evidence="1">
        <text>alpha-D-galactosyl-(1-&gt;3)-beta-D-galactosyl-(1-&gt;4)-N-acetyl-beta-D-glucosaminyl-(1-&gt;3)-beta-D-galactosyl-(1-&gt;4)-beta-D-glucosyl-(1&lt;-&gt;1')-ceramide + GDP-beta-L-fucose = a neolactoside IV(3)-alpha-Gal,III(3)-alpha-Fuc-nLc4Cer + GDP + H(+)</text>
        <dbReference type="Rhea" id="RHEA:48380"/>
        <dbReference type="ChEBI" id="CHEBI:15378"/>
        <dbReference type="ChEBI" id="CHEBI:57273"/>
        <dbReference type="ChEBI" id="CHEBI:58189"/>
        <dbReference type="ChEBI" id="CHEBI:90380"/>
        <dbReference type="ChEBI" id="CHEBI:90381"/>
    </reaction>
    <physiologicalReaction direction="left-to-right" evidence="1">
        <dbReference type="Rhea" id="RHEA:48381"/>
    </physiologicalReaction>
</comment>
<comment type="catalytic activity">
    <reaction evidence="1">
        <text>a neolactoside nLc4Cer + GDP-beta-L-fucose = a neolactoside III(3)-alpha-Fuc-nLc4Cer + GDP + H(+)</text>
        <dbReference type="Rhea" id="RHEA:48376"/>
        <dbReference type="ChEBI" id="CHEBI:15378"/>
        <dbReference type="ChEBI" id="CHEBI:57273"/>
        <dbReference type="ChEBI" id="CHEBI:58189"/>
        <dbReference type="ChEBI" id="CHEBI:90376"/>
        <dbReference type="ChEBI" id="CHEBI:90379"/>
    </reaction>
    <physiologicalReaction direction="left-to-right" evidence="1">
        <dbReference type="Rhea" id="RHEA:48377"/>
    </physiologicalReaction>
</comment>
<comment type="catalytic activity">
    <reaction evidence="3">
        <text>an N-acetyl-alpha-neuraminyl-(2-&gt;3)-beta-D-galactosyl-(1-&gt;4)-N-acetyl-beta-D-glucosaminyl derivative + GDP-beta-L-fucose = an alpha-Neu5Ac-(2-&gt;3)-beta-D-Gal-(1-&gt;4)-[alpha-L-Fuc-(1-&gt;3)]-beta-D-GlcNAc derivative + GDP + H(+)</text>
        <dbReference type="Rhea" id="RHEA:56076"/>
        <dbReference type="ChEBI" id="CHEBI:15378"/>
        <dbReference type="ChEBI" id="CHEBI:57273"/>
        <dbReference type="ChEBI" id="CHEBI:58189"/>
        <dbReference type="ChEBI" id="CHEBI:136545"/>
        <dbReference type="ChEBI" id="CHEBI:139509"/>
    </reaction>
    <physiologicalReaction direction="left-to-right" evidence="3">
        <dbReference type="Rhea" id="RHEA:56077"/>
    </physiologicalReaction>
</comment>
<comment type="catalytic activity">
    <reaction evidence="3">
        <text>beta-D-Gal-(1-&gt;4)-beta-D-GlcNAc-(1-&gt;3)-beta-D-Gal-(1-&gt;4)-D-Glc + GDP-beta-L-fucose = beta-D-Gal-(1-&gt;4)-[alpha-L-Fuc-(1-&gt;3)]-beta-D-GlcNAc-(1-&gt;3)-beta-D-Gal-(1-&gt;4)-D-Glc + GDP + H(+)</text>
        <dbReference type="Rhea" id="RHEA:77187"/>
        <dbReference type="ChEBI" id="CHEBI:15378"/>
        <dbReference type="ChEBI" id="CHEBI:57273"/>
        <dbReference type="ChEBI" id="CHEBI:58189"/>
        <dbReference type="ChEBI" id="CHEBI:60239"/>
        <dbReference type="ChEBI" id="CHEBI:61352"/>
    </reaction>
    <physiologicalReaction direction="left-to-right" evidence="3">
        <dbReference type="Rhea" id="RHEA:77188"/>
    </physiologicalReaction>
</comment>
<comment type="catalytic activity">
    <reaction evidence="3">
        <text>an alpha-L-Fuc-(1-&gt;2)-beta-D-Gal-(1-&gt;4)-beta-D-GlcNAc derivative + GDP-beta-L-fucose = an alpha-L-Fuc-(1-&gt;2)-beta-D-Gal-(1-&gt;4)-[alpha-L-Fuc-(1-&gt;3)]-beta-D-GlcNAc derivative + GDP + H(+)</text>
        <dbReference type="Rhea" id="RHEA:77191"/>
        <dbReference type="ChEBI" id="CHEBI:15378"/>
        <dbReference type="ChEBI" id="CHEBI:57273"/>
        <dbReference type="ChEBI" id="CHEBI:58189"/>
        <dbReference type="ChEBI" id="CHEBI:133510"/>
        <dbReference type="ChEBI" id="CHEBI:195560"/>
    </reaction>
    <physiologicalReaction direction="left-to-right" evidence="3">
        <dbReference type="Rhea" id="RHEA:77192"/>
    </physiologicalReaction>
</comment>
<comment type="activity regulation">
    <text evidence="3">Activated by Mn2+.</text>
</comment>
<comment type="pathway">
    <text evidence="1 3">Protein modification; protein glycosylation.</text>
</comment>
<comment type="pathway">
    <text evidence="1">Glycolipid biosynthesis.</text>
</comment>
<comment type="subunit">
    <text evidence="3">Homodimer.</text>
</comment>
<comment type="subcellular location">
    <subcellularLocation>
        <location evidence="3">Golgi apparatus</location>
        <location evidence="3">trans-Golgi network membrane</location>
        <topology evidence="2">Single-pass type II membrane protein</topology>
    </subcellularLocation>
    <subcellularLocation>
        <location evidence="1">Golgi apparatus membrane</location>
    </subcellularLocation>
</comment>
<comment type="domain">
    <text evidence="3">The donor-binding domain adopts a Rossman-like fold involved in GDP-beta-L-fucose sugar donor interactions.</text>
</comment>
<comment type="domain">
    <text evidence="3">The acceptor-binding domain adopts a Rossman-like fold consisting of six-stranded parallel beta sheets characteristic of the Toll/interleukin-1 receptor (TIR) fold family. Interacts with the LacNAc unit of type 2 LacNAc and H-type 2 LacNAc structures. It contains the catalytic base Glu-137 which deprotonates the hydroxyl group of GlcNAc while forming bridging interactions with the donor sugar to position the catalytic machinery in the active site.</text>
</comment>
<comment type="PTM">
    <text evidence="3">N-glycosylated with complex-type N-glycans.</text>
</comment>
<comment type="similarity">
    <text evidence="6">Belongs to the glycosyltransferase 10 family.</text>
</comment>
<accession>Q8HZR2</accession>
<protein>
    <recommendedName>
        <fullName evidence="3">4-galactosyl-N-acetylglucosaminide 3-alpha-L-fucosyltransferase 9</fullName>
        <ecNumber evidence="3">2.4.1.152</ecNumber>
    </recommendedName>
    <alternativeName>
        <fullName evidence="3">Fucosyltransferase 9</fullName>
    </alternativeName>
    <alternativeName>
        <fullName evidence="5">Fucosyltransferase IX</fullName>
        <shortName evidence="5">Fuc-TIX</shortName>
        <shortName>FucT-IX</shortName>
    </alternativeName>
    <alternativeName>
        <fullName>Galactoside 3-L-fucosyltransferase</fullName>
    </alternativeName>
</protein>
<gene>
    <name evidence="3" type="primary">FUT9</name>
</gene>
<organism>
    <name type="scientific">Bos taurus</name>
    <name type="common">Bovine</name>
    <dbReference type="NCBI Taxonomy" id="9913"/>
    <lineage>
        <taxon>Eukaryota</taxon>
        <taxon>Metazoa</taxon>
        <taxon>Chordata</taxon>
        <taxon>Craniata</taxon>
        <taxon>Vertebrata</taxon>
        <taxon>Euteleostomi</taxon>
        <taxon>Mammalia</taxon>
        <taxon>Eutheria</taxon>
        <taxon>Laurasiatheria</taxon>
        <taxon>Artiodactyla</taxon>
        <taxon>Ruminantia</taxon>
        <taxon>Pecora</taxon>
        <taxon>Bovidae</taxon>
        <taxon>Bovinae</taxon>
        <taxon>Bos</taxon>
    </lineage>
</organism>
<feature type="chain" id="PRO_0000221115" description="4-galactosyl-N-acetylglucosaminide 3-alpha-L-fucosyltransferase 9">
    <location>
        <begin position="1"/>
        <end position="359"/>
    </location>
</feature>
<feature type="topological domain" description="Cytoplasmic" evidence="4">
    <location>
        <begin position="1"/>
        <end position="11"/>
    </location>
</feature>
<feature type="transmembrane region" description="Helical; Signal-anchor for type II membrane protein" evidence="4">
    <location>
        <begin position="12"/>
        <end position="32"/>
    </location>
</feature>
<feature type="topological domain" description="Lumenal" evidence="4">
    <location>
        <begin position="33"/>
        <end position="359"/>
    </location>
</feature>
<feature type="region of interest" description="Acceptor-binding" evidence="3">
    <location>
        <begin position="63"/>
        <end position="168"/>
    </location>
</feature>
<feature type="region of interest" description="Donor-binding" evidence="3">
    <location>
        <begin position="169"/>
        <end position="326"/>
    </location>
</feature>
<feature type="region of interest" description="Acceptor-binding" evidence="3">
    <location>
        <begin position="327"/>
        <end position="359"/>
    </location>
</feature>
<feature type="active site" description="Nucleophile" evidence="3">
    <location>
        <position position="137"/>
    </location>
</feature>
<feature type="binding site" evidence="3">
    <location>
        <position position="75"/>
    </location>
    <ligand>
        <name>a beta-D-galactosyl-(1-&gt;4)-N-acetyl-beta-D-glucosaminyl derivative</name>
        <dbReference type="ChEBI" id="CHEBI:133507"/>
    </ligand>
</feature>
<feature type="binding site" evidence="3">
    <location>
        <position position="137"/>
    </location>
    <ligand>
        <name>a beta-D-galactosyl-(1-&gt;4)-N-acetyl-beta-D-glucosaminyl derivative</name>
        <dbReference type="ChEBI" id="CHEBI:133507"/>
    </ligand>
</feature>
<feature type="binding site" evidence="3">
    <location>
        <position position="137"/>
    </location>
    <ligand>
        <name>GDP-beta-L-fucose</name>
        <dbReference type="ChEBI" id="CHEBI:57273"/>
    </ligand>
</feature>
<feature type="binding site" evidence="3">
    <location>
        <position position="168"/>
    </location>
    <ligand>
        <name>GDP-beta-L-fucose</name>
        <dbReference type="ChEBI" id="CHEBI:57273"/>
    </ligand>
</feature>
<feature type="binding site" evidence="3">
    <location>
        <position position="192"/>
    </location>
    <ligand>
        <name>GDP-beta-L-fucose</name>
        <dbReference type="ChEBI" id="CHEBI:57273"/>
    </ligand>
</feature>
<feature type="binding site" evidence="3">
    <location>
        <position position="194"/>
    </location>
    <ligand>
        <name>GDP-beta-L-fucose</name>
        <dbReference type="ChEBI" id="CHEBI:57273"/>
    </ligand>
</feature>
<feature type="binding site" evidence="3">
    <location>
        <position position="195"/>
    </location>
    <ligand>
        <name>GDP-beta-L-fucose</name>
        <dbReference type="ChEBI" id="CHEBI:57273"/>
    </ligand>
</feature>
<feature type="binding site" evidence="3">
    <location>
        <position position="202"/>
    </location>
    <ligand>
        <name>GDP-beta-L-fucose</name>
        <dbReference type="ChEBI" id="CHEBI:57273"/>
    </ligand>
</feature>
<feature type="binding site" evidence="3">
    <location>
        <position position="226"/>
    </location>
    <ligand>
        <name>GDP-beta-L-fucose</name>
        <dbReference type="ChEBI" id="CHEBI:57273"/>
    </ligand>
</feature>
<feature type="binding site" evidence="3">
    <location>
        <position position="241"/>
    </location>
    <ligand>
        <name>GDP-beta-L-fucose</name>
        <dbReference type="ChEBI" id="CHEBI:57273"/>
    </ligand>
</feature>
<feature type="binding site" evidence="3">
    <location>
        <position position="246"/>
    </location>
    <ligand>
        <name>GDP-beta-L-fucose</name>
        <dbReference type="ChEBI" id="CHEBI:57273"/>
    </ligand>
</feature>
<feature type="binding site" evidence="3">
    <location>
        <position position="252"/>
    </location>
    <ligand>
        <name>GDP-beta-L-fucose</name>
        <dbReference type="ChEBI" id="CHEBI:57273"/>
    </ligand>
</feature>
<feature type="binding site" evidence="3">
    <location>
        <position position="255"/>
    </location>
    <ligand>
        <name>GDP-beta-L-fucose</name>
        <dbReference type="ChEBI" id="CHEBI:57273"/>
    </ligand>
</feature>
<feature type="binding site" evidence="3">
    <location>
        <position position="256"/>
    </location>
    <ligand>
        <name>GDP-beta-L-fucose</name>
        <dbReference type="ChEBI" id="CHEBI:57273"/>
    </ligand>
</feature>
<feature type="glycosylation site" description="N-linked (GlcNAc...) asparagine" evidence="4">
    <location>
        <position position="62"/>
    </location>
</feature>
<feature type="glycosylation site" description="N-linked (GlcNAc...) asparagine" evidence="4">
    <location>
        <position position="101"/>
    </location>
</feature>
<feature type="glycosylation site" description="N-linked (GlcNAc...) asparagine" evidence="3 4">
    <location>
        <position position="153"/>
    </location>
</feature>
<feature type="disulfide bond" evidence="3">
    <location>
        <begin position="82"/>
        <end position="335"/>
    </location>
</feature>
<feature type="disulfide bond" evidence="3">
    <location>
        <begin position="91"/>
        <end position="338"/>
    </location>
</feature>
<feature type="disulfide bond" evidence="3">
    <location>
        <begin position="190"/>
        <end position="238"/>
    </location>
</feature>
<dbReference type="EC" id="2.4.1.152" evidence="3"/>
<dbReference type="EMBL" id="AF531093">
    <property type="protein sequence ID" value="AAN63883.1"/>
    <property type="molecule type" value="mRNA"/>
</dbReference>
<dbReference type="RefSeq" id="NP_777160.1">
    <property type="nucleotide sequence ID" value="NM_174735.2"/>
</dbReference>
<dbReference type="SMR" id="Q8HZR2"/>
<dbReference type="FunCoup" id="Q8HZR2">
    <property type="interactions" value="435"/>
</dbReference>
<dbReference type="STRING" id="9913.ENSBTAP00000010501"/>
<dbReference type="CAZy" id="GT10">
    <property type="family name" value="Glycosyltransferase Family 10"/>
</dbReference>
<dbReference type="GlyCosmos" id="Q8HZR2">
    <property type="glycosylation" value="3 sites, No reported glycans"/>
</dbReference>
<dbReference type="GlyGen" id="Q8HZR2">
    <property type="glycosylation" value="3 sites"/>
</dbReference>
<dbReference type="PaxDb" id="9913-ENSBTAP00000010501"/>
<dbReference type="GeneID" id="282853"/>
<dbReference type="KEGG" id="bta:282853"/>
<dbReference type="CTD" id="10690"/>
<dbReference type="eggNOG" id="KOG2619">
    <property type="taxonomic scope" value="Eukaryota"/>
</dbReference>
<dbReference type="InParanoid" id="Q8HZR2"/>
<dbReference type="OrthoDB" id="427096at2759"/>
<dbReference type="UniPathway" id="UPA00378"/>
<dbReference type="Proteomes" id="UP000009136">
    <property type="component" value="Unplaced"/>
</dbReference>
<dbReference type="GO" id="GO:0005794">
    <property type="term" value="C:Golgi apparatus"/>
    <property type="evidence" value="ECO:0000250"/>
    <property type="project" value="UniProtKB"/>
</dbReference>
<dbReference type="GO" id="GO:0000139">
    <property type="term" value="C:Golgi membrane"/>
    <property type="evidence" value="ECO:0007669"/>
    <property type="project" value="UniProtKB-SubCell"/>
</dbReference>
<dbReference type="GO" id="GO:0005802">
    <property type="term" value="C:trans-Golgi network"/>
    <property type="evidence" value="ECO:0000250"/>
    <property type="project" value="UniProtKB"/>
</dbReference>
<dbReference type="GO" id="GO:0032588">
    <property type="term" value="C:trans-Golgi network membrane"/>
    <property type="evidence" value="ECO:0000250"/>
    <property type="project" value="UniProtKB"/>
</dbReference>
<dbReference type="GO" id="GO:0017083">
    <property type="term" value="F:4-galactosyl-N-acetylglucosaminide 3-alpha-L-fucosyltransferase activity"/>
    <property type="evidence" value="ECO:0000250"/>
    <property type="project" value="UniProtKB"/>
</dbReference>
<dbReference type="GO" id="GO:0046920">
    <property type="term" value="F:alpha-(1-&gt;3)-fucosyltransferase activity"/>
    <property type="evidence" value="ECO:0000250"/>
    <property type="project" value="AgBase"/>
</dbReference>
<dbReference type="GO" id="GO:0042803">
    <property type="term" value="F:protein homodimerization activity"/>
    <property type="evidence" value="ECO:0000250"/>
    <property type="project" value="UniProtKB"/>
</dbReference>
<dbReference type="GO" id="GO:0036065">
    <property type="term" value="P:fucosylation"/>
    <property type="evidence" value="ECO:0000250"/>
    <property type="project" value="UniProtKB"/>
</dbReference>
<dbReference type="GO" id="GO:0006688">
    <property type="term" value="P:glycosphingolipid biosynthetic process"/>
    <property type="evidence" value="ECO:0000250"/>
    <property type="project" value="UniProtKB"/>
</dbReference>
<dbReference type="GO" id="GO:0106402">
    <property type="term" value="P:Lewis x epitope biosynthetic process"/>
    <property type="evidence" value="ECO:0000250"/>
    <property type="project" value="UniProtKB"/>
</dbReference>
<dbReference type="GO" id="GO:0030182">
    <property type="term" value="P:neuron differentiation"/>
    <property type="evidence" value="ECO:0000250"/>
    <property type="project" value="UniProtKB"/>
</dbReference>
<dbReference type="GO" id="GO:0036445">
    <property type="term" value="P:neuronal stem cell division"/>
    <property type="evidence" value="ECO:0000250"/>
    <property type="project" value="UniProtKB"/>
</dbReference>
<dbReference type="GO" id="GO:0000271">
    <property type="term" value="P:polysaccharide biosynthetic process"/>
    <property type="evidence" value="ECO:0000250"/>
    <property type="project" value="UniProtKB"/>
</dbReference>
<dbReference type="GO" id="GO:0010976">
    <property type="term" value="P:positive regulation of neuron projection development"/>
    <property type="evidence" value="ECO:0000250"/>
    <property type="project" value="UniProtKB"/>
</dbReference>
<dbReference type="GO" id="GO:0006486">
    <property type="term" value="P:protein glycosylation"/>
    <property type="evidence" value="ECO:0000250"/>
    <property type="project" value="AgBase"/>
</dbReference>
<dbReference type="GO" id="GO:0006487">
    <property type="term" value="P:protein N-linked glycosylation"/>
    <property type="evidence" value="ECO:0000250"/>
    <property type="project" value="UniProtKB"/>
</dbReference>
<dbReference type="GO" id="GO:0006493">
    <property type="term" value="P:protein O-linked glycosylation"/>
    <property type="evidence" value="ECO:0000250"/>
    <property type="project" value="UniProtKB"/>
</dbReference>
<dbReference type="GO" id="GO:1903037">
    <property type="term" value="P:regulation of leukocyte cell-cell adhesion"/>
    <property type="evidence" value="ECO:0000250"/>
    <property type="project" value="UniProtKB"/>
</dbReference>
<dbReference type="GO" id="GO:1903236">
    <property type="term" value="P:regulation of leukocyte tethering or rolling"/>
    <property type="evidence" value="ECO:0000250"/>
    <property type="project" value="UniProtKB"/>
</dbReference>
<dbReference type="FunFam" id="3.40.50.11660:FF:000001">
    <property type="entry name" value="alpha-(1,3)-fucosyltransferase 9"/>
    <property type="match status" value="1"/>
</dbReference>
<dbReference type="Gene3D" id="3.40.50.11660">
    <property type="entry name" value="Glycosyl transferase family 10, C-terminal domain"/>
    <property type="match status" value="1"/>
</dbReference>
<dbReference type="InterPro" id="IPR055270">
    <property type="entry name" value="Glyco_tran_10_C"/>
</dbReference>
<dbReference type="InterPro" id="IPR031481">
    <property type="entry name" value="Glyco_tran_10_N"/>
</dbReference>
<dbReference type="InterPro" id="IPR001503">
    <property type="entry name" value="Glyco_trans_10"/>
</dbReference>
<dbReference type="InterPro" id="IPR038577">
    <property type="entry name" value="GT10-like_C_sf"/>
</dbReference>
<dbReference type="PANTHER" id="PTHR11929:SF10">
    <property type="entry name" value="4-GALACTOSYL-N-ACETYLGLUCOSAMINIDE 3-ALPHA-L-FUCOSYLTRANSFERASE 9"/>
    <property type="match status" value="1"/>
</dbReference>
<dbReference type="PANTHER" id="PTHR11929">
    <property type="entry name" value="ALPHA- 1,3 -FUCOSYLTRANSFERASE"/>
    <property type="match status" value="1"/>
</dbReference>
<dbReference type="Pfam" id="PF17039">
    <property type="entry name" value="Glyco_tran_10_N"/>
    <property type="match status" value="1"/>
</dbReference>
<dbReference type="Pfam" id="PF00852">
    <property type="entry name" value="Glyco_transf_10"/>
    <property type="match status" value="1"/>
</dbReference>
<dbReference type="SUPFAM" id="SSF53756">
    <property type="entry name" value="UDP-Glycosyltransferase/glycogen phosphorylase"/>
    <property type="match status" value="1"/>
</dbReference>
<name>FUT9_BOVIN</name>
<sequence length="359" mass="41979">MTSASKGILRPFLIVCIILACSMVCLFIYIKPTNSWIFSPMESASSVLKMKNFFSTKTGDFNETTILIWVWPFGQTFDLTSCQAMFNIQGCHLTTDRSLYNKSHAVLIHHRDISWDLTNLPQQARPPFQKWIWMNLESPTHTPQKSGIEHLFNLTLTYRRDSDIQVPYGFLTVSTNPFVFEVPNKEKLVCWVVSNWNPEHARVKYYNELSKSIEIHTYGQAFGEYVTDKNLIPTISTCKFYLSFENSIHKDYITEKLYNAFLAGSVPVVLGPSRENYENYIPADSFIHVEDYNSPSELAKYLKEVDKNNKLYLSYFNWRKDFTVNLPRFWESHACLACDHVKRHQEYKSVGNLEKWFWN</sequence>
<keyword id="KW-1015">Disulfide bond</keyword>
<keyword id="KW-0325">Glycoprotein</keyword>
<keyword id="KW-0328">Glycosyltransferase</keyword>
<keyword id="KW-0333">Golgi apparatus</keyword>
<keyword id="KW-0443">Lipid metabolism</keyword>
<keyword id="KW-0472">Membrane</keyword>
<keyword id="KW-1185">Reference proteome</keyword>
<keyword id="KW-0735">Signal-anchor</keyword>
<keyword id="KW-0808">Transferase</keyword>
<keyword id="KW-0812">Transmembrane</keyword>
<keyword id="KW-1133">Transmembrane helix</keyword>
<evidence type="ECO:0000250" key="1">
    <source>
        <dbReference type="UniProtKB" id="O88819"/>
    </source>
</evidence>
<evidence type="ECO:0000250" key="2">
    <source>
        <dbReference type="UniProtKB" id="Q6P4F1"/>
    </source>
</evidence>
<evidence type="ECO:0000250" key="3">
    <source>
        <dbReference type="UniProtKB" id="Q9Y231"/>
    </source>
</evidence>
<evidence type="ECO:0000255" key="4"/>
<evidence type="ECO:0000303" key="5">
    <source ref="1"/>
</evidence>
<evidence type="ECO:0000305" key="6"/>